<proteinExistence type="evidence at protein level"/>
<name>LRFN2_HUMAN</name>
<accession>Q9ULH4</accession>
<accession>A5PKU3</accession>
<accession>Q5SYP9</accession>
<dbReference type="EMBL" id="AB033072">
    <property type="protein sequence ID" value="BAA86560.1"/>
    <property type="status" value="ALT_INIT"/>
    <property type="molecule type" value="mRNA"/>
</dbReference>
<dbReference type="EMBL" id="AK291474">
    <property type="protein sequence ID" value="BAF84163.1"/>
    <property type="molecule type" value="mRNA"/>
</dbReference>
<dbReference type="EMBL" id="AL591063">
    <property type="status" value="NOT_ANNOTATED_CDS"/>
    <property type="molecule type" value="Genomic_DNA"/>
</dbReference>
<dbReference type="EMBL" id="CH471081">
    <property type="protein sequence ID" value="EAX04006.1"/>
    <property type="molecule type" value="Genomic_DNA"/>
</dbReference>
<dbReference type="EMBL" id="BC142616">
    <property type="protein sequence ID" value="AAI42617.1"/>
    <property type="molecule type" value="mRNA"/>
</dbReference>
<dbReference type="CCDS" id="CCDS34443.1"/>
<dbReference type="RefSeq" id="NP_065788.1">
    <property type="nucleotide sequence ID" value="NM_020737.3"/>
</dbReference>
<dbReference type="RefSeq" id="XP_011513063.1">
    <property type="nucleotide sequence ID" value="XM_011514761.2"/>
</dbReference>
<dbReference type="RefSeq" id="XP_011513064.1">
    <property type="nucleotide sequence ID" value="XM_011514762.3"/>
</dbReference>
<dbReference type="RefSeq" id="XP_016866599.1">
    <property type="nucleotide sequence ID" value="XM_017011110.1"/>
</dbReference>
<dbReference type="RefSeq" id="XP_054212037.1">
    <property type="nucleotide sequence ID" value="XM_054356062.1"/>
</dbReference>
<dbReference type="SMR" id="Q9ULH4"/>
<dbReference type="BioGRID" id="121564">
    <property type="interactions" value="18"/>
</dbReference>
<dbReference type="FunCoup" id="Q9ULH4">
    <property type="interactions" value="229"/>
</dbReference>
<dbReference type="IntAct" id="Q9ULH4">
    <property type="interactions" value="4"/>
</dbReference>
<dbReference type="STRING" id="9606.ENSP00000345985"/>
<dbReference type="GlyCosmos" id="Q9ULH4">
    <property type="glycosylation" value="4 sites, No reported glycans"/>
</dbReference>
<dbReference type="GlyGen" id="Q9ULH4">
    <property type="glycosylation" value="6 sites, 1 N-linked glycan (1 site), 1 O-linked glycan (1 site)"/>
</dbReference>
<dbReference type="iPTMnet" id="Q9ULH4"/>
<dbReference type="PhosphoSitePlus" id="Q9ULH4"/>
<dbReference type="SwissPalm" id="Q9ULH4"/>
<dbReference type="BioMuta" id="LRFN2"/>
<dbReference type="DMDM" id="62286951"/>
<dbReference type="jPOST" id="Q9ULH4"/>
<dbReference type="MassIVE" id="Q9ULH4"/>
<dbReference type="PaxDb" id="9606-ENSP00000345985"/>
<dbReference type="PeptideAtlas" id="Q9ULH4"/>
<dbReference type="ProteomicsDB" id="85027"/>
<dbReference type="Antibodypedia" id="2525">
    <property type="antibodies" value="104 antibodies from 23 providers"/>
</dbReference>
<dbReference type="DNASU" id="57497"/>
<dbReference type="Ensembl" id="ENST00000338305.7">
    <property type="protein sequence ID" value="ENSP00000345985.6"/>
    <property type="gene ID" value="ENSG00000156564.10"/>
</dbReference>
<dbReference type="GeneID" id="57497"/>
<dbReference type="KEGG" id="hsa:57497"/>
<dbReference type="MANE-Select" id="ENST00000338305.7">
    <property type="protein sequence ID" value="ENSP00000345985.6"/>
    <property type="RefSeq nucleotide sequence ID" value="NM_020737.3"/>
    <property type="RefSeq protein sequence ID" value="NP_065788.1"/>
</dbReference>
<dbReference type="UCSC" id="uc003oph.2">
    <property type="organism name" value="human"/>
</dbReference>
<dbReference type="AGR" id="HGNC:21226"/>
<dbReference type="CTD" id="57497"/>
<dbReference type="DisGeNET" id="57497"/>
<dbReference type="GeneCards" id="LRFN2"/>
<dbReference type="HGNC" id="HGNC:21226">
    <property type="gene designation" value="LRFN2"/>
</dbReference>
<dbReference type="HPA" id="ENSG00000156564">
    <property type="expression patterns" value="Group enriched (brain, retina)"/>
</dbReference>
<dbReference type="MalaCards" id="LRFN2"/>
<dbReference type="MIM" id="612808">
    <property type="type" value="gene"/>
</dbReference>
<dbReference type="neXtProt" id="NX_Q9ULH4"/>
<dbReference type="OpenTargets" id="ENSG00000156564"/>
<dbReference type="PharmGKB" id="PA134913285"/>
<dbReference type="VEuPathDB" id="HostDB:ENSG00000156564"/>
<dbReference type="eggNOG" id="KOG0619">
    <property type="taxonomic scope" value="Eukaryota"/>
</dbReference>
<dbReference type="GeneTree" id="ENSGT00940000156417"/>
<dbReference type="HOGENOM" id="CLU_016998_1_0_1"/>
<dbReference type="InParanoid" id="Q9ULH4"/>
<dbReference type="OMA" id="ELMDFSA"/>
<dbReference type="OrthoDB" id="1394818at2759"/>
<dbReference type="PAN-GO" id="Q9ULH4">
    <property type="GO annotations" value="2 GO annotations based on evolutionary models"/>
</dbReference>
<dbReference type="PhylomeDB" id="Q9ULH4"/>
<dbReference type="TreeFam" id="TF350185"/>
<dbReference type="PathwayCommons" id="Q9ULH4"/>
<dbReference type="Reactome" id="R-HSA-8849932">
    <property type="pathway name" value="Synaptic adhesion-like molecules"/>
</dbReference>
<dbReference type="SIGNOR" id="Q9ULH4"/>
<dbReference type="BioGRID-ORCS" id="57497">
    <property type="hits" value="8 hits in 1142 CRISPR screens"/>
</dbReference>
<dbReference type="ChiTaRS" id="LRFN2">
    <property type="organism name" value="human"/>
</dbReference>
<dbReference type="GenomeRNAi" id="57497"/>
<dbReference type="Pharos" id="Q9ULH4">
    <property type="development level" value="Tbio"/>
</dbReference>
<dbReference type="PRO" id="PR:Q9ULH4"/>
<dbReference type="Proteomes" id="UP000005640">
    <property type="component" value="Chromosome 6"/>
</dbReference>
<dbReference type="RNAct" id="Q9ULH4">
    <property type="molecule type" value="protein"/>
</dbReference>
<dbReference type="Bgee" id="ENSG00000156564">
    <property type="expression patterns" value="Expressed in cortical plate and 43 other cell types or tissues"/>
</dbReference>
<dbReference type="GO" id="GO:0009986">
    <property type="term" value="C:cell surface"/>
    <property type="evidence" value="ECO:0000318"/>
    <property type="project" value="GO_Central"/>
</dbReference>
<dbReference type="GO" id="GO:0005886">
    <property type="term" value="C:plasma membrane"/>
    <property type="evidence" value="ECO:0000304"/>
    <property type="project" value="Reactome"/>
</dbReference>
<dbReference type="GO" id="GO:0098839">
    <property type="term" value="C:postsynaptic density membrane"/>
    <property type="evidence" value="ECO:0000318"/>
    <property type="project" value="GO_Central"/>
</dbReference>
<dbReference type="GO" id="GO:0098793">
    <property type="term" value="C:presynapse"/>
    <property type="evidence" value="ECO:0007669"/>
    <property type="project" value="Ensembl"/>
</dbReference>
<dbReference type="GO" id="GO:0098685">
    <property type="term" value="C:Schaffer collateral - CA1 synapse"/>
    <property type="evidence" value="ECO:0007669"/>
    <property type="project" value="Ensembl"/>
</dbReference>
<dbReference type="GO" id="GO:0050804">
    <property type="term" value="P:modulation of chemical synaptic transmission"/>
    <property type="evidence" value="ECO:0007669"/>
    <property type="project" value="Ensembl"/>
</dbReference>
<dbReference type="GO" id="GO:0099175">
    <property type="term" value="P:regulation of postsynapse organization"/>
    <property type="evidence" value="ECO:0007669"/>
    <property type="project" value="Ensembl"/>
</dbReference>
<dbReference type="CDD" id="cd00063">
    <property type="entry name" value="FN3"/>
    <property type="match status" value="1"/>
</dbReference>
<dbReference type="FunFam" id="2.60.40.10:FF:000235">
    <property type="entry name" value="Leucine-rich repeat and fibronectin type III domain-containing 2"/>
    <property type="match status" value="1"/>
</dbReference>
<dbReference type="FunFam" id="3.80.10.10:FF:000045">
    <property type="entry name" value="Leucine-rich repeat and fibronectin type III domain-containing 2"/>
    <property type="match status" value="1"/>
</dbReference>
<dbReference type="FunFam" id="2.60.40.10:FF:000091">
    <property type="entry name" value="Leucine-rich repeat and fibronectin type III domain-containing protein 1"/>
    <property type="match status" value="1"/>
</dbReference>
<dbReference type="FunFam" id="3.80.10.10:FF:000019">
    <property type="entry name" value="leucine-rich repeat and fibronectin type III domain-containing protein 1"/>
    <property type="match status" value="1"/>
</dbReference>
<dbReference type="Gene3D" id="2.60.40.10">
    <property type="entry name" value="Immunoglobulins"/>
    <property type="match status" value="2"/>
</dbReference>
<dbReference type="Gene3D" id="3.80.10.10">
    <property type="entry name" value="Ribonuclease Inhibitor"/>
    <property type="match status" value="2"/>
</dbReference>
<dbReference type="InterPro" id="IPR000483">
    <property type="entry name" value="Cys-rich_flank_reg_C"/>
</dbReference>
<dbReference type="InterPro" id="IPR003961">
    <property type="entry name" value="FN3_dom"/>
</dbReference>
<dbReference type="InterPro" id="IPR036116">
    <property type="entry name" value="FN3_sf"/>
</dbReference>
<dbReference type="InterPro" id="IPR007110">
    <property type="entry name" value="Ig-like_dom"/>
</dbReference>
<dbReference type="InterPro" id="IPR036179">
    <property type="entry name" value="Ig-like_dom_sf"/>
</dbReference>
<dbReference type="InterPro" id="IPR013783">
    <property type="entry name" value="Ig-like_fold"/>
</dbReference>
<dbReference type="InterPro" id="IPR013098">
    <property type="entry name" value="Ig_I-set"/>
</dbReference>
<dbReference type="InterPro" id="IPR003599">
    <property type="entry name" value="Ig_sub"/>
</dbReference>
<dbReference type="InterPro" id="IPR003598">
    <property type="entry name" value="Ig_sub2"/>
</dbReference>
<dbReference type="InterPro" id="IPR001611">
    <property type="entry name" value="Leu-rich_rpt"/>
</dbReference>
<dbReference type="InterPro" id="IPR003591">
    <property type="entry name" value="Leu-rich_rpt_typical-subtyp"/>
</dbReference>
<dbReference type="InterPro" id="IPR050467">
    <property type="entry name" value="LRFN"/>
</dbReference>
<dbReference type="InterPro" id="IPR032675">
    <property type="entry name" value="LRR_dom_sf"/>
</dbReference>
<dbReference type="PANTHER" id="PTHR45842:SF6">
    <property type="entry name" value="LEUCINE-RICH REPEAT AND FIBRONECTIN TYPE-III DOMAIN-CONTAINING PROTEIN 2"/>
    <property type="match status" value="1"/>
</dbReference>
<dbReference type="PANTHER" id="PTHR45842">
    <property type="entry name" value="SYNAPTIC ADHESION-LIKE MOLECULE SALM"/>
    <property type="match status" value="1"/>
</dbReference>
<dbReference type="Pfam" id="PF00041">
    <property type="entry name" value="fn3"/>
    <property type="match status" value="1"/>
</dbReference>
<dbReference type="Pfam" id="PF07679">
    <property type="entry name" value="I-set"/>
    <property type="match status" value="1"/>
</dbReference>
<dbReference type="Pfam" id="PF13855">
    <property type="entry name" value="LRR_8"/>
    <property type="match status" value="2"/>
</dbReference>
<dbReference type="SMART" id="SM00409">
    <property type="entry name" value="IG"/>
    <property type="match status" value="1"/>
</dbReference>
<dbReference type="SMART" id="SM00408">
    <property type="entry name" value="IGc2"/>
    <property type="match status" value="1"/>
</dbReference>
<dbReference type="SMART" id="SM00369">
    <property type="entry name" value="LRR_TYP"/>
    <property type="match status" value="6"/>
</dbReference>
<dbReference type="SMART" id="SM00082">
    <property type="entry name" value="LRRCT"/>
    <property type="match status" value="1"/>
</dbReference>
<dbReference type="SUPFAM" id="SSF49265">
    <property type="entry name" value="Fibronectin type III"/>
    <property type="match status" value="1"/>
</dbReference>
<dbReference type="SUPFAM" id="SSF48726">
    <property type="entry name" value="Immunoglobulin"/>
    <property type="match status" value="1"/>
</dbReference>
<dbReference type="SUPFAM" id="SSF52058">
    <property type="entry name" value="L domain-like"/>
    <property type="match status" value="1"/>
</dbReference>
<dbReference type="PROSITE" id="PS50853">
    <property type="entry name" value="FN3"/>
    <property type="match status" value="1"/>
</dbReference>
<dbReference type="PROSITE" id="PS50835">
    <property type="entry name" value="IG_LIKE"/>
    <property type="match status" value="1"/>
</dbReference>
<dbReference type="PROSITE" id="PS51450">
    <property type="entry name" value="LRR"/>
    <property type="match status" value="6"/>
</dbReference>
<comment type="function">
    <text evidence="1">Promotes neurite outgrowth in hippocampal neurons. Enhances the cell surface expression of 2 NMDA receptor subunits GRIN1 and GRIN2A. May play a role in redistributing DLG4 to the cell periphery (By similarity).</text>
</comment>
<comment type="subunit">
    <text evidence="1 6">Forms heteromeric complexes with LRFN1, LRFN3, LRFN4 and LRFN5. Can form homomeric complexes, but not across cell junctions. Directly interacts with 2 NMDA receptor subunits GRIN1 and GRIN2A (By similarity). Interacts with DLG1, DLG2, DLG3 and DLG4.</text>
</comment>
<comment type="subcellular location">
    <subcellularLocation>
        <location>Membrane</location>
        <topology>Single-pass type I membrane protein</topology>
    </subcellularLocation>
    <subcellularLocation>
        <location>Synapse</location>
    </subcellularLocation>
    <subcellularLocation>
        <location evidence="1">Postsynaptic cell membrane</location>
    </subcellularLocation>
</comment>
<comment type="domain">
    <text evidence="1">The PDZ-binding motif is required for cell surface expression, neurite outgrowth promotion (By similarity). This motif is also involved in DLG1-, DLG3- and DLG4-binding.</text>
</comment>
<comment type="PTM">
    <text evidence="1">Glycosylated.</text>
</comment>
<comment type="similarity">
    <text evidence="7">Belongs to the LRFN family.</text>
</comment>
<comment type="sequence caution" evidence="7">
    <conflict type="erroneous initiation">
        <sequence resource="EMBL-CDS" id="BAA86560"/>
    </conflict>
    <text>Extended N-terminus.</text>
</comment>
<protein>
    <recommendedName>
        <fullName>Leucine-rich repeat and fibronectin type-III domain-containing protein 2</fullName>
    </recommendedName>
    <alternativeName>
        <fullName>Synaptic adhesion-like molecule 1</fullName>
    </alternativeName>
</protein>
<keyword id="KW-1003">Cell membrane</keyword>
<keyword id="KW-1015">Disulfide bond</keyword>
<keyword id="KW-0325">Glycoprotein</keyword>
<keyword id="KW-0393">Immunoglobulin domain</keyword>
<keyword id="KW-0433">Leucine-rich repeat</keyword>
<keyword id="KW-0472">Membrane</keyword>
<keyword id="KW-0628">Postsynaptic cell membrane</keyword>
<keyword id="KW-1267">Proteomics identification</keyword>
<keyword id="KW-1185">Reference proteome</keyword>
<keyword id="KW-0677">Repeat</keyword>
<keyword id="KW-0732">Signal</keyword>
<keyword id="KW-0770">Synapse</keyword>
<keyword id="KW-0812">Transmembrane</keyword>
<keyword id="KW-1133">Transmembrane helix</keyword>
<evidence type="ECO:0000250" key="1"/>
<evidence type="ECO:0000255" key="2"/>
<evidence type="ECO:0000255" key="3">
    <source>
        <dbReference type="PROSITE-ProRule" id="PRU00114"/>
    </source>
</evidence>
<evidence type="ECO:0000255" key="4">
    <source>
        <dbReference type="PROSITE-ProRule" id="PRU00316"/>
    </source>
</evidence>
<evidence type="ECO:0000256" key="5">
    <source>
        <dbReference type="SAM" id="MobiDB-lite"/>
    </source>
</evidence>
<evidence type="ECO:0000269" key="6">
    <source>
    </source>
</evidence>
<evidence type="ECO:0000305" key="7"/>
<feature type="signal peptide" evidence="2">
    <location>
        <begin position="1"/>
        <end position="20"/>
    </location>
</feature>
<feature type="chain" id="PRO_0000014838" description="Leucine-rich repeat and fibronectin type-III domain-containing protein 2">
    <location>
        <begin position="21"/>
        <end position="789"/>
    </location>
</feature>
<feature type="topological domain" description="Extracellular" evidence="2">
    <location>
        <begin position="21"/>
        <end position="534"/>
    </location>
</feature>
<feature type="transmembrane region" description="Helical" evidence="2">
    <location>
        <begin position="535"/>
        <end position="555"/>
    </location>
</feature>
<feature type="topological domain" description="Cytoplasmic" evidence="2">
    <location>
        <begin position="556"/>
        <end position="789"/>
    </location>
</feature>
<feature type="domain" description="LRRNT">
    <location>
        <begin position="21"/>
        <end position="52"/>
    </location>
</feature>
<feature type="repeat" description="LRR 1">
    <location>
        <begin position="53"/>
        <end position="74"/>
    </location>
</feature>
<feature type="repeat" description="LRR 2">
    <location>
        <begin position="77"/>
        <end position="98"/>
    </location>
</feature>
<feature type="repeat" description="LRR 3">
    <location>
        <begin position="101"/>
        <end position="122"/>
    </location>
</feature>
<feature type="repeat" description="LRR 4">
    <location>
        <begin position="125"/>
        <end position="146"/>
    </location>
</feature>
<feature type="repeat" description="LRR 5">
    <location>
        <begin position="150"/>
        <end position="171"/>
    </location>
</feature>
<feature type="repeat" description="LRR 6">
    <location>
        <begin position="174"/>
        <end position="195"/>
    </location>
</feature>
<feature type="repeat" description="LRR 7">
    <location>
        <begin position="198"/>
        <end position="219"/>
    </location>
</feature>
<feature type="domain" description="LRRCT">
    <location>
        <begin position="242"/>
        <end position="288"/>
    </location>
</feature>
<feature type="domain" description="Ig-like">
    <location>
        <begin position="289"/>
        <end position="375"/>
    </location>
</feature>
<feature type="domain" description="Fibronectin type-III" evidence="4">
    <location>
        <begin position="421"/>
        <end position="518"/>
    </location>
</feature>
<feature type="region of interest" description="Disordered" evidence="5">
    <location>
        <begin position="383"/>
        <end position="424"/>
    </location>
</feature>
<feature type="region of interest" description="Disordered" evidence="5">
    <location>
        <begin position="577"/>
        <end position="602"/>
    </location>
</feature>
<feature type="region of interest" description="Disordered" evidence="5">
    <location>
        <begin position="619"/>
        <end position="654"/>
    </location>
</feature>
<feature type="region of interest" description="Disordered" evidence="5">
    <location>
        <begin position="668"/>
        <end position="702"/>
    </location>
</feature>
<feature type="short sequence motif" description="PDZ-binding">
    <location>
        <begin position="786"/>
        <end position="789"/>
    </location>
</feature>
<feature type="compositionally biased region" description="Gly residues" evidence="5">
    <location>
        <begin position="407"/>
        <end position="416"/>
    </location>
</feature>
<feature type="compositionally biased region" description="Pro residues" evidence="5">
    <location>
        <begin position="583"/>
        <end position="599"/>
    </location>
</feature>
<feature type="compositionally biased region" description="Low complexity" evidence="5">
    <location>
        <begin position="619"/>
        <end position="638"/>
    </location>
</feature>
<feature type="compositionally biased region" description="Pro residues" evidence="5">
    <location>
        <begin position="641"/>
        <end position="650"/>
    </location>
</feature>
<feature type="glycosylation site" description="N-linked (GlcNAc...) asparagine" evidence="2">
    <location>
        <position position="29"/>
    </location>
</feature>
<feature type="glycosylation site" description="N-linked (GlcNAc...) asparagine" evidence="2">
    <location>
        <position position="332"/>
    </location>
</feature>
<feature type="glycosylation site" description="N-linked (GlcNAc...) asparagine" evidence="2">
    <location>
        <position position="341"/>
    </location>
</feature>
<feature type="glycosylation site" description="N-linked (GlcNAc...) asparagine" evidence="2">
    <location>
        <position position="384"/>
    </location>
</feature>
<feature type="disulfide bond" evidence="3">
    <location>
        <begin position="310"/>
        <end position="359"/>
    </location>
</feature>
<feature type="sequence variant" id="VAR_049894" description="In dbSNP:rs3734559.">
    <original>D</original>
    <variation>N</variation>
    <location>
        <position position="770"/>
    </location>
</feature>
<feature type="mutagenesis site" description="Loss of DLG1-, DLG3- and DLG4-binding." evidence="6">
    <location>
        <begin position="787"/>
        <end position="789"/>
    </location>
</feature>
<gene>
    <name type="primary">LRFN2</name>
    <name type="synonym">KIAA1246</name>
    <name type="synonym">SALM1</name>
</gene>
<reference key="1">
    <citation type="journal article" date="1999" name="DNA Res.">
        <title>Prediction of the coding sequences of unidentified human genes. XV. The complete sequences of 100 new cDNA clones from brain which code for large proteins in vitro.</title>
        <authorList>
            <person name="Nagase T."/>
            <person name="Ishikawa K."/>
            <person name="Kikuno R."/>
            <person name="Hirosawa M."/>
            <person name="Nomura N."/>
            <person name="Ohara O."/>
        </authorList>
    </citation>
    <scope>NUCLEOTIDE SEQUENCE [LARGE SCALE MRNA]</scope>
    <source>
        <tissue>Brain</tissue>
    </source>
</reference>
<reference key="2">
    <citation type="journal article" date="2004" name="Nat. Genet.">
        <title>Complete sequencing and characterization of 21,243 full-length human cDNAs.</title>
        <authorList>
            <person name="Ota T."/>
            <person name="Suzuki Y."/>
            <person name="Nishikawa T."/>
            <person name="Otsuki T."/>
            <person name="Sugiyama T."/>
            <person name="Irie R."/>
            <person name="Wakamatsu A."/>
            <person name="Hayashi K."/>
            <person name="Sato H."/>
            <person name="Nagai K."/>
            <person name="Kimura K."/>
            <person name="Makita H."/>
            <person name="Sekine M."/>
            <person name="Obayashi M."/>
            <person name="Nishi T."/>
            <person name="Shibahara T."/>
            <person name="Tanaka T."/>
            <person name="Ishii S."/>
            <person name="Yamamoto J."/>
            <person name="Saito K."/>
            <person name="Kawai Y."/>
            <person name="Isono Y."/>
            <person name="Nakamura Y."/>
            <person name="Nagahari K."/>
            <person name="Murakami K."/>
            <person name="Yasuda T."/>
            <person name="Iwayanagi T."/>
            <person name="Wagatsuma M."/>
            <person name="Shiratori A."/>
            <person name="Sudo H."/>
            <person name="Hosoiri T."/>
            <person name="Kaku Y."/>
            <person name="Kodaira H."/>
            <person name="Kondo H."/>
            <person name="Sugawara M."/>
            <person name="Takahashi M."/>
            <person name="Kanda K."/>
            <person name="Yokoi T."/>
            <person name="Furuya T."/>
            <person name="Kikkawa E."/>
            <person name="Omura Y."/>
            <person name="Abe K."/>
            <person name="Kamihara K."/>
            <person name="Katsuta N."/>
            <person name="Sato K."/>
            <person name="Tanikawa M."/>
            <person name="Yamazaki M."/>
            <person name="Ninomiya K."/>
            <person name="Ishibashi T."/>
            <person name="Yamashita H."/>
            <person name="Murakawa K."/>
            <person name="Fujimori K."/>
            <person name="Tanai H."/>
            <person name="Kimata M."/>
            <person name="Watanabe M."/>
            <person name="Hiraoka S."/>
            <person name="Chiba Y."/>
            <person name="Ishida S."/>
            <person name="Ono Y."/>
            <person name="Takiguchi S."/>
            <person name="Watanabe S."/>
            <person name="Yosida M."/>
            <person name="Hotuta T."/>
            <person name="Kusano J."/>
            <person name="Kanehori K."/>
            <person name="Takahashi-Fujii A."/>
            <person name="Hara H."/>
            <person name="Tanase T.-O."/>
            <person name="Nomura Y."/>
            <person name="Togiya S."/>
            <person name="Komai F."/>
            <person name="Hara R."/>
            <person name="Takeuchi K."/>
            <person name="Arita M."/>
            <person name="Imose N."/>
            <person name="Musashino K."/>
            <person name="Yuuki H."/>
            <person name="Oshima A."/>
            <person name="Sasaki N."/>
            <person name="Aotsuka S."/>
            <person name="Yoshikawa Y."/>
            <person name="Matsunawa H."/>
            <person name="Ichihara T."/>
            <person name="Shiohata N."/>
            <person name="Sano S."/>
            <person name="Moriya S."/>
            <person name="Momiyama H."/>
            <person name="Satoh N."/>
            <person name="Takami S."/>
            <person name="Terashima Y."/>
            <person name="Suzuki O."/>
            <person name="Nakagawa S."/>
            <person name="Senoh A."/>
            <person name="Mizoguchi H."/>
            <person name="Goto Y."/>
            <person name="Shimizu F."/>
            <person name="Wakebe H."/>
            <person name="Hishigaki H."/>
            <person name="Watanabe T."/>
            <person name="Sugiyama A."/>
            <person name="Takemoto M."/>
            <person name="Kawakami B."/>
            <person name="Yamazaki M."/>
            <person name="Watanabe K."/>
            <person name="Kumagai A."/>
            <person name="Itakura S."/>
            <person name="Fukuzumi Y."/>
            <person name="Fujimori Y."/>
            <person name="Komiyama M."/>
            <person name="Tashiro H."/>
            <person name="Tanigami A."/>
            <person name="Fujiwara T."/>
            <person name="Ono T."/>
            <person name="Yamada K."/>
            <person name="Fujii Y."/>
            <person name="Ozaki K."/>
            <person name="Hirao M."/>
            <person name="Ohmori Y."/>
            <person name="Kawabata A."/>
            <person name="Hikiji T."/>
            <person name="Kobatake N."/>
            <person name="Inagaki H."/>
            <person name="Ikema Y."/>
            <person name="Okamoto S."/>
            <person name="Okitani R."/>
            <person name="Kawakami T."/>
            <person name="Noguchi S."/>
            <person name="Itoh T."/>
            <person name="Shigeta K."/>
            <person name="Senba T."/>
            <person name="Matsumura K."/>
            <person name="Nakajima Y."/>
            <person name="Mizuno T."/>
            <person name="Morinaga M."/>
            <person name="Sasaki M."/>
            <person name="Togashi T."/>
            <person name="Oyama M."/>
            <person name="Hata H."/>
            <person name="Watanabe M."/>
            <person name="Komatsu T."/>
            <person name="Mizushima-Sugano J."/>
            <person name="Satoh T."/>
            <person name="Shirai Y."/>
            <person name="Takahashi Y."/>
            <person name="Nakagawa K."/>
            <person name="Okumura K."/>
            <person name="Nagase T."/>
            <person name="Nomura N."/>
            <person name="Kikuchi H."/>
            <person name="Masuho Y."/>
            <person name="Yamashita R."/>
            <person name="Nakai K."/>
            <person name="Yada T."/>
            <person name="Nakamura Y."/>
            <person name="Ohara O."/>
            <person name="Isogai T."/>
            <person name="Sugano S."/>
        </authorList>
    </citation>
    <scope>NUCLEOTIDE SEQUENCE [LARGE SCALE MRNA]</scope>
    <source>
        <tissue>Fetal brain</tissue>
    </source>
</reference>
<reference key="3">
    <citation type="journal article" date="2003" name="Nature">
        <title>The DNA sequence and analysis of human chromosome 6.</title>
        <authorList>
            <person name="Mungall A.J."/>
            <person name="Palmer S.A."/>
            <person name="Sims S.K."/>
            <person name="Edwards C.A."/>
            <person name="Ashurst J.L."/>
            <person name="Wilming L."/>
            <person name="Jones M.C."/>
            <person name="Horton R."/>
            <person name="Hunt S.E."/>
            <person name="Scott C.E."/>
            <person name="Gilbert J.G.R."/>
            <person name="Clamp M.E."/>
            <person name="Bethel G."/>
            <person name="Milne S."/>
            <person name="Ainscough R."/>
            <person name="Almeida J.P."/>
            <person name="Ambrose K.D."/>
            <person name="Andrews T.D."/>
            <person name="Ashwell R.I.S."/>
            <person name="Babbage A.K."/>
            <person name="Bagguley C.L."/>
            <person name="Bailey J."/>
            <person name="Banerjee R."/>
            <person name="Barker D.J."/>
            <person name="Barlow K.F."/>
            <person name="Bates K."/>
            <person name="Beare D.M."/>
            <person name="Beasley H."/>
            <person name="Beasley O."/>
            <person name="Bird C.P."/>
            <person name="Blakey S.E."/>
            <person name="Bray-Allen S."/>
            <person name="Brook J."/>
            <person name="Brown A.J."/>
            <person name="Brown J.Y."/>
            <person name="Burford D.C."/>
            <person name="Burrill W."/>
            <person name="Burton J."/>
            <person name="Carder C."/>
            <person name="Carter N.P."/>
            <person name="Chapman J.C."/>
            <person name="Clark S.Y."/>
            <person name="Clark G."/>
            <person name="Clee C.M."/>
            <person name="Clegg S."/>
            <person name="Cobley V."/>
            <person name="Collier R.E."/>
            <person name="Collins J.E."/>
            <person name="Colman L.K."/>
            <person name="Corby N.R."/>
            <person name="Coville G.J."/>
            <person name="Culley K.M."/>
            <person name="Dhami P."/>
            <person name="Davies J."/>
            <person name="Dunn M."/>
            <person name="Earthrowl M.E."/>
            <person name="Ellington A.E."/>
            <person name="Evans K.A."/>
            <person name="Faulkner L."/>
            <person name="Francis M.D."/>
            <person name="Frankish A."/>
            <person name="Frankland J."/>
            <person name="French L."/>
            <person name="Garner P."/>
            <person name="Garnett J."/>
            <person name="Ghori M.J."/>
            <person name="Gilby L.M."/>
            <person name="Gillson C.J."/>
            <person name="Glithero R.J."/>
            <person name="Grafham D.V."/>
            <person name="Grant M."/>
            <person name="Gribble S."/>
            <person name="Griffiths C."/>
            <person name="Griffiths M.N.D."/>
            <person name="Hall R."/>
            <person name="Halls K.S."/>
            <person name="Hammond S."/>
            <person name="Harley J.L."/>
            <person name="Hart E.A."/>
            <person name="Heath P.D."/>
            <person name="Heathcott R."/>
            <person name="Holmes S.J."/>
            <person name="Howden P.J."/>
            <person name="Howe K.L."/>
            <person name="Howell G.R."/>
            <person name="Huckle E."/>
            <person name="Humphray S.J."/>
            <person name="Humphries M.D."/>
            <person name="Hunt A.R."/>
            <person name="Johnson C.M."/>
            <person name="Joy A.A."/>
            <person name="Kay M."/>
            <person name="Keenan S.J."/>
            <person name="Kimberley A.M."/>
            <person name="King A."/>
            <person name="Laird G.K."/>
            <person name="Langford C."/>
            <person name="Lawlor S."/>
            <person name="Leongamornlert D.A."/>
            <person name="Leversha M."/>
            <person name="Lloyd C.R."/>
            <person name="Lloyd D.M."/>
            <person name="Loveland J.E."/>
            <person name="Lovell J."/>
            <person name="Martin S."/>
            <person name="Mashreghi-Mohammadi M."/>
            <person name="Maslen G.L."/>
            <person name="Matthews L."/>
            <person name="McCann O.T."/>
            <person name="McLaren S.J."/>
            <person name="McLay K."/>
            <person name="McMurray A."/>
            <person name="Moore M.J.F."/>
            <person name="Mullikin J.C."/>
            <person name="Niblett D."/>
            <person name="Nickerson T."/>
            <person name="Novik K.L."/>
            <person name="Oliver K."/>
            <person name="Overton-Larty E.K."/>
            <person name="Parker A."/>
            <person name="Patel R."/>
            <person name="Pearce A.V."/>
            <person name="Peck A.I."/>
            <person name="Phillimore B.J.C.T."/>
            <person name="Phillips S."/>
            <person name="Plumb R.W."/>
            <person name="Porter K.M."/>
            <person name="Ramsey Y."/>
            <person name="Ranby S.A."/>
            <person name="Rice C.M."/>
            <person name="Ross M.T."/>
            <person name="Searle S.M."/>
            <person name="Sehra H.K."/>
            <person name="Sheridan E."/>
            <person name="Skuce C.D."/>
            <person name="Smith S."/>
            <person name="Smith M."/>
            <person name="Spraggon L."/>
            <person name="Squares S.L."/>
            <person name="Steward C.A."/>
            <person name="Sycamore N."/>
            <person name="Tamlyn-Hall G."/>
            <person name="Tester J."/>
            <person name="Theaker A.J."/>
            <person name="Thomas D.W."/>
            <person name="Thorpe A."/>
            <person name="Tracey A."/>
            <person name="Tromans A."/>
            <person name="Tubby B."/>
            <person name="Wall M."/>
            <person name="Wallis J.M."/>
            <person name="West A.P."/>
            <person name="White S.S."/>
            <person name="Whitehead S.L."/>
            <person name="Whittaker H."/>
            <person name="Wild A."/>
            <person name="Willey D.J."/>
            <person name="Wilmer T.E."/>
            <person name="Wood J.M."/>
            <person name="Wray P.W."/>
            <person name="Wyatt J.C."/>
            <person name="Young L."/>
            <person name="Younger R.M."/>
            <person name="Bentley D.R."/>
            <person name="Coulson A."/>
            <person name="Durbin R.M."/>
            <person name="Hubbard T."/>
            <person name="Sulston J.E."/>
            <person name="Dunham I."/>
            <person name="Rogers J."/>
            <person name="Beck S."/>
        </authorList>
    </citation>
    <scope>NUCLEOTIDE SEQUENCE [LARGE SCALE GENOMIC DNA]</scope>
</reference>
<reference key="4">
    <citation type="submission" date="2005-07" db="EMBL/GenBank/DDBJ databases">
        <authorList>
            <person name="Mural R.J."/>
            <person name="Istrail S."/>
            <person name="Sutton G.G."/>
            <person name="Florea L."/>
            <person name="Halpern A.L."/>
            <person name="Mobarry C.M."/>
            <person name="Lippert R."/>
            <person name="Walenz B."/>
            <person name="Shatkay H."/>
            <person name="Dew I."/>
            <person name="Miller J.R."/>
            <person name="Flanigan M.J."/>
            <person name="Edwards N.J."/>
            <person name="Bolanos R."/>
            <person name="Fasulo D."/>
            <person name="Halldorsson B.V."/>
            <person name="Hannenhalli S."/>
            <person name="Turner R."/>
            <person name="Yooseph S."/>
            <person name="Lu F."/>
            <person name="Nusskern D.R."/>
            <person name="Shue B.C."/>
            <person name="Zheng X.H."/>
            <person name="Zhong F."/>
            <person name="Delcher A.L."/>
            <person name="Huson D.H."/>
            <person name="Kravitz S.A."/>
            <person name="Mouchard L."/>
            <person name="Reinert K."/>
            <person name="Remington K.A."/>
            <person name="Clark A.G."/>
            <person name="Waterman M.S."/>
            <person name="Eichler E.E."/>
            <person name="Adams M.D."/>
            <person name="Hunkapiller M.W."/>
            <person name="Myers E.W."/>
            <person name="Venter J.C."/>
        </authorList>
    </citation>
    <scope>NUCLEOTIDE SEQUENCE [LARGE SCALE GENOMIC DNA]</scope>
</reference>
<reference key="5">
    <citation type="journal article" date="2004" name="Genome Res.">
        <title>The status, quality, and expansion of the NIH full-length cDNA project: the Mammalian Gene Collection (MGC).</title>
        <authorList>
            <consortium name="The MGC Project Team"/>
        </authorList>
    </citation>
    <scope>NUCLEOTIDE SEQUENCE [LARGE SCALE MRNA]</scope>
</reference>
<reference key="6">
    <citation type="journal article" date="2006" name="Neuron">
        <title>SALM synaptic cell adhesion-like molecules regulate the differentiation of excitatory synapses.</title>
        <authorList>
            <person name="Ko J."/>
            <person name="Kim S."/>
            <person name="Chung H.S."/>
            <person name="Kim K."/>
            <person name="Han K."/>
            <person name="Kim H."/>
            <person name="Jun H."/>
            <person name="Kaang B.-K."/>
            <person name="Kim E."/>
        </authorList>
    </citation>
    <scope>INTERACTION WITH DLG1; DLG2; DLG3 AND DLG4</scope>
    <scope>MUTAGENESIS OF 787-SER--VAL-789</scope>
</reference>
<sequence length="789" mass="84731">METLLGGLLAFGMAFAVVDACPKYCVCQNLSESLGTLCPSKGLLFVPPDIDRRTVELRLGGNFIIHISRQDFANMTGLVDLTLSRNTISHIQPFSFLDLESLRSLHLDSNRLPSLGEDTLRGLVNLQHLIVNNNQLGGIADEAFEDFLLTLEDLDLSYNNLHGLPWDSVRRMVNLHQLSLDHNLLDHIAEGTFADLQKLARLDLTSNRLQKLPPDPIFARSQASALTATPFAPPLSFSFGGNPLHCNCELLWLRRLERDDDLETCGSPGGLKGRYFWHVREEEFVCEPPLITQHTHKLLVLEGQAATLKCKAIGDPSPLIHWVAPDDRLVGNSSRTAVYDNGTLDIFITTSQDSGAFTCIAANAAGEATAMVEVSIVQLPHLSNSTSRTAPPKSRLSDITGSSKTSRGGGGSGGGEPPKSPPERAVLVSEVTTTSALVKWSVSKSAPRVKMYQLQYNCSDDEVLIYRMIPASNKAFVVNNLVSGTGYDLCVLAMWDDTATTLTATNIVGCAQFFTKADYPQCQSMHSQILGGTMILVIGGIIVATLLVFIVILMVRYKVCNHEAPSKMAAAVSNVYSQTNGAQPPPPSSAPAGAPPQGPPKVVVRNELLDFTASLARASDSSSSSSLGSGEAAGLGRAPWRIPPSAPRPKPSLDRLMGAFASLDLKSQRKEELLDSRTPAGRGAGTSARGHHSDREPLLGPPAARARSLLPLPLEGKAKRSHSFDMGDFAAAAAGGVVPGGYSPPRKVSNIWTKRSLSVNGMLLPFEESDLVGARGTFGSSEWVMESTV</sequence>
<organism>
    <name type="scientific">Homo sapiens</name>
    <name type="common">Human</name>
    <dbReference type="NCBI Taxonomy" id="9606"/>
    <lineage>
        <taxon>Eukaryota</taxon>
        <taxon>Metazoa</taxon>
        <taxon>Chordata</taxon>
        <taxon>Craniata</taxon>
        <taxon>Vertebrata</taxon>
        <taxon>Euteleostomi</taxon>
        <taxon>Mammalia</taxon>
        <taxon>Eutheria</taxon>
        <taxon>Euarchontoglires</taxon>
        <taxon>Primates</taxon>
        <taxon>Haplorrhini</taxon>
        <taxon>Catarrhini</taxon>
        <taxon>Hominidae</taxon>
        <taxon>Homo</taxon>
    </lineage>
</organism>